<evidence type="ECO:0000255" key="1">
    <source>
        <dbReference type="HAMAP-Rule" id="MF_00212"/>
    </source>
</evidence>
<evidence type="ECO:0000256" key="2">
    <source>
        <dbReference type="SAM" id="MobiDB-lite"/>
    </source>
</evidence>
<proteinExistence type="inferred from homology"/>
<keyword id="KW-0274">FAD</keyword>
<keyword id="KW-0285">Flavoprotein</keyword>
<keyword id="KW-0560">Oxidoreductase</keyword>
<keyword id="KW-0816">Tricarboxylic acid cycle</keyword>
<feature type="chain" id="PRO_1000191316" description="Probable malate:quinone oxidoreductase">
    <location>
        <begin position="1"/>
        <end position="548"/>
    </location>
</feature>
<feature type="region of interest" description="Disordered" evidence="2">
    <location>
        <begin position="521"/>
        <end position="548"/>
    </location>
</feature>
<feature type="compositionally biased region" description="Low complexity" evidence="2">
    <location>
        <begin position="530"/>
        <end position="541"/>
    </location>
</feature>
<reference key="1">
    <citation type="journal article" date="2009" name="PLoS Genet.">
        <title>Organised genome dynamics in the Escherichia coli species results in highly diverse adaptive paths.</title>
        <authorList>
            <person name="Touchon M."/>
            <person name="Hoede C."/>
            <person name="Tenaillon O."/>
            <person name="Barbe V."/>
            <person name="Baeriswyl S."/>
            <person name="Bidet P."/>
            <person name="Bingen E."/>
            <person name="Bonacorsi S."/>
            <person name="Bouchier C."/>
            <person name="Bouvet O."/>
            <person name="Calteau A."/>
            <person name="Chiapello H."/>
            <person name="Clermont O."/>
            <person name="Cruveiller S."/>
            <person name="Danchin A."/>
            <person name="Diard M."/>
            <person name="Dossat C."/>
            <person name="Karoui M.E."/>
            <person name="Frapy E."/>
            <person name="Garry L."/>
            <person name="Ghigo J.M."/>
            <person name="Gilles A.M."/>
            <person name="Johnson J."/>
            <person name="Le Bouguenec C."/>
            <person name="Lescat M."/>
            <person name="Mangenot S."/>
            <person name="Martinez-Jehanne V."/>
            <person name="Matic I."/>
            <person name="Nassif X."/>
            <person name="Oztas S."/>
            <person name="Petit M.A."/>
            <person name="Pichon C."/>
            <person name="Rouy Z."/>
            <person name="Ruf C.S."/>
            <person name="Schneider D."/>
            <person name="Tourret J."/>
            <person name="Vacherie B."/>
            <person name="Vallenet D."/>
            <person name="Medigue C."/>
            <person name="Rocha E.P.C."/>
            <person name="Denamur E."/>
        </authorList>
    </citation>
    <scope>NUCLEOTIDE SEQUENCE [LARGE SCALE GENOMIC DNA]</scope>
    <source>
        <strain>IAI1</strain>
    </source>
</reference>
<protein>
    <recommendedName>
        <fullName evidence="1">Probable malate:quinone oxidoreductase</fullName>
        <ecNumber evidence="1">1.1.5.4</ecNumber>
    </recommendedName>
    <alternativeName>
        <fullName evidence="1">MQO</fullName>
    </alternativeName>
    <alternativeName>
        <fullName evidence="1">Malate dehydrogenase [quinone]</fullName>
    </alternativeName>
</protein>
<dbReference type="EC" id="1.1.5.4" evidence="1"/>
<dbReference type="EMBL" id="CU928160">
    <property type="protein sequence ID" value="CAQ99138.1"/>
    <property type="molecule type" value="Genomic_DNA"/>
</dbReference>
<dbReference type="RefSeq" id="WP_000758074.1">
    <property type="nucleotide sequence ID" value="NC_011741.1"/>
</dbReference>
<dbReference type="SMR" id="B7M5Q1"/>
<dbReference type="GeneID" id="75206462"/>
<dbReference type="KEGG" id="ecr:ECIAI1_2294"/>
<dbReference type="HOGENOM" id="CLU_028151_0_0_6"/>
<dbReference type="UniPathway" id="UPA00223">
    <property type="reaction ID" value="UER01008"/>
</dbReference>
<dbReference type="GO" id="GO:0047545">
    <property type="term" value="F:2-hydroxyglutarate dehydrogenase activity"/>
    <property type="evidence" value="ECO:0007669"/>
    <property type="project" value="TreeGrafter"/>
</dbReference>
<dbReference type="GO" id="GO:0008924">
    <property type="term" value="F:L-malate dehydrogenase (quinone) activity"/>
    <property type="evidence" value="ECO:0007669"/>
    <property type="project" value="UniProtKB-UniRule"/>
</dbReference>
<dbReference type="GO" id="GO:0006099">
    <property type="term" value="P:tricarboxylic acid cycle"/>
    <property type="evidence" value="ECO:0007669"/>
    <property type="project" value="UniProtKB-UniRule"/>
</dbReference>
<dbReference type="Gene3D" id="3.30.9.10">
    <property type="entry name" value="D-Amino Acid Oxidase, subunit A, domain 2"/>
    <property type="match status" value="1"/>
</dbReference>
<dbReference type="Gene3D" id="3.50.50.60">
    <property type="entry name" value="FAD/NAD(P)-binding domain"/>
    <property type="match status" value="1"/>
</dbReference>
<dbReference type="HAMAP" id="MF_00212">
    <property type="entry name" value="MQO"/>
    <property type="match status" value="1"/>
</dbReference>
<dbReference type="InterPro" id="IPR036188">
    <property type="entry name" value="FAD/NAD-bd_sf"/>
</dbReference>
<dbReference type="InterPro" id="IPR006231">
    <property type="entry name" value="MQO"/>
</dbReference>
<dbReference type="NCBIfam" id="TIGR01320">
    <property type="entry name" value="mal_quin_oxido"/>
    <property type="match status" value="1"/>
</dbReference>
<dbReference type="NCBIfam" id="NF003603">
    <property type="entry name" value="PRK05257.1-1"/>
    <property type="match status" value="1"/>
</dbReference>
<dbReference type="NCBIfam" id="NF003605">
    <property type="entry name" value="PRK05257.1-4"/>
    <property type="match status" value="1"/>
</dbReference>
<dbReference type="NCBIfam" id="NF003606">
    <property type="entry name" value="PRK05257.2-1"/>
    <property type="match status" value="1"/>
</dbReference>
<dbReference type="NCBIfam" id="NF003608">
    <property type="entry name" value="PRK05257.2-4"/>
    <property type="match status" value="1"/>
</dbReference>
<dbReference type="NCBIfam" id="NF003611">
    <property type="entry name" value="PRK05257.3-2"/>
    <property type="match status" value="1"/>
</dbReference>
<dbReference type="NCBIfam" id="NF009875">
    <property type="entry name" value="PRK13339.1"/>
    <property type="match status" value="1"/>
</dbReference>
<dbReference type="PANTHER" id="PTHR43104">
    <property type="entry name" value="L-2-HYDROXYGLUTARATE DEHYDROGENASE, MITOCHONDRIAL"/>
    <property type="match status" value="1"/>
</dbReference>
<dbReference type="PANTHER" id="PTHR43104:SF2">
    <property type="entry name" value="L-2-HYDROXYGLUTARATE DEHYDROGENASE, MITOCHONDRIAL"/>
    <property type="match status" value="1"/>
</dbReference>
<dbReference type="Pfam" id="PF06039">
    <property type="entry name" value="Mqo"/>
    <property type="match status" value="1"/>
</dbReference>
<dbReference type="SUPFAM" id="SSF51905">
    <property type="entry name" value="FAD/NAD(P)-binding domain"/>
    <property type="match status" value="1"/>
</dbReference>
<gene>
    <name evidence="1" type="primary">mqo</name>
    <name type="ordered locus">ECIAI1_2294</name>
</gene>
<name>MQO_ECO8A</name>
<comment type="catalytic activity">
    <reaction evidence="1">
        <text>(S)-malate + a quinone = a quinol + oxaloacetate</text>
        <dbReference type="Rhea" id="RHEA:46012"/>
        <dbReference type="ChEBI" id="CHEBI:15589"/>
        <dbReference type="ChEBI" id="CHEBI:16452"/>
        <dbReference type="ChEBI" id="CHEBI:24646"/>
        <dbReference type="ChEBI" id="CHEBI:132124"/>
        <dbReference type="EC" id="1.1.5.4"/>
    </reaction>
</comment>
<comment type="cofactor">
    <cofactor evidence="1">
        <name>FAD</name>
        <dbReference type="ChEBI" id="CHEBI:57692"/>
    </cofactor>
</comment>
<comment type="pathway">
    <text evidence="1">Carbohydrate metabolism; tricarboxylic acid cycle; oxaloacetate from (S)-malate (quinone route): step 1/1.</text>
</comment>
<comment type="similarity">
    <text evidence="1">Belongs to the MQO family.</text>
</comment>
<organism>
    <name type="scientific">Escherichia coli O8 (strain IAI1)</name>
    <dbReference type="NCBI Taxonomy" id="585034"/>
    <lineage>
        <taxon>Bacteria</taxon>
        <taxon>Pseudomonadati</taxon>
        <taxon>Pseudomonadota</taxon>
        <taxon>Gammaproteobacteria</taxon>
        <taxon>Enterobacterales</taxon>
        <taxon>Enterobacteriaceae</taxon>
        <taxon>Escherichia</taxon>
    </lineage>
</organism>
<sequence>MKKVTAMLFSMAVGLNAVSMAAKAKASEEQETDVLLIGGGIMSATLGTYLRELEPEWSMTMVERLEGVAQESSNGWNNAGTGHSALMELNYTPQNADGSISIEKAVAINEAFQISRQFWAHQVERGVLRTPRSFINTVPHMSFVWGEDNVNFLRARYAALQQSSLFRGMRYSEDHAQIKEWAPLVMEGRDPQQKVAATRTEIGTDVNYGEITRQLIASLQKKSNFSLQLSSEVRALKRNDDNTWTVTVADLKNGTAQNIRAKFVFIGAGGAALKLLQESGIPEAKDYAGFPVGGQFLVSENPDVVNHHLAKVYGKASVGAPPMSVPHIDTRVLDGKRVVLFGPFATFSTKFLKNGSLWDLMSSTTTSNVMPMMHVGLDNFDLVKYLVSQVMLSEEDRFEALKEYYPQAKKEDWRLWQAGQRVQIIKRDAEKGGVLRLGTEVVSDQQGTIAALLGASPGASTAAPIMLDLLEKVFGDRVSSPQWQATLKAIVPSYGRKLNGDVAATERELQYTSEVLGLKYDKPQAADSTPKPQLKPQPVQKEVADIAL</sequence>
<accession>B7M5Q1</accession>